<name>TRHO_HAHCH</name>
<keyword id="KW-0560">Oxidoreductase</keyword>
<keyword id="KW-1185">Reference proteome</keyword>
<keyword id="KW-0819">tRNA processing</keyword>
<feature type="chain" id="PRO_0000242923" description="tRNA uridine(34) hydroxylase">
    <location>
        <begin position="1"/>
        <end position="331"/>
    </location>
</feature>
<feature type="domain" description="Rhodanese" evidence="1">
    <location>
        <begin position="123"/>
        <end position="217"/>
    </location>
</feature>
<feature type="region of interest" description="Disordered" evidence="2">
    <location>
        <begin position="293"/>
        <end position="331"/>
    </location>
</feature>
<feature type="compositionally biased region" description="Basic residues" evidence="2">
    <location>
        <begin position="307"/>
        <end position="323"/>
    </location>
</feature>
<feature type="active site" description="Cysteine persulfide intermediate" evidence="1">
    <location>
        <position position="177"/>
    </location>
</feature>
<evidence type="ECO:0000255" key="1">
    <source>
        <dbReference type="HAMAP-Rule" id="MF_00469"/>
    </source>
</evidence>
<evidence type="ECO:0000256" key="2">
    <source>
        <dbReference type="SAM" id="MobiDB-lite"/>
    </source>
</evidence>
<accession>Q2SPJ7</accession>
<proteinExistence type="inferred from homology"/>
<comment type="function">
    <text evidence="1">Catalyzes oxygen-dependent 5-hydroxyuridine (ho5U) modification at position 34 in tRNAs.</text>
</comment>
<comment type="catalytic activity">
    <reaction evidence="1">
        <text>uridine(34) in tRNA + AH2 + O2 = 5-hydroxyuridine(34) in tRNA + A + H2O</text>
        <dbReference type="Rhea" id="RHEA:64224"/>
        <dbReference type="Rhea" id="RHEA-COMP:11727"/>
        <dbReference type="Rhea" id="RHEA-COMP:13381"/>
        <dbReference type="ChEBI" id="CHEBI:13193"/>
        <dbReference type="ChEBI" id="CHEBI:15377"/>
        <dbReference type="ChEBI" id="CHEBI:15379"/>
        <dbReference type="ChEBI" id="CHEBI:17499"/>
        <dbReference type="ChEBI" id="CHEBI:65315"/>
        <dbReference type="ChEBI" id="CHEBI:136877"/>
    </reaction>
</comment>
<comment type="similarity">
    <text evidence="1">Belongs to the TrhO family.</text>
</comment>
<protein>
    <recommendedName>
        <fullName evidence="1">tRNA uridine(34) hydroxylase</fullName>
        <ecNumber evidence="1">1.14.-.-</ecNumber>
    </recommendedName>
    <alternativeName>
        <fullName evidence="1">tRNA hydroxylation protein O</fullName>
    </alternativeName>
</protein>
<gene>
    <name evidence="1" type="primary">trhO</name>
    <name type="ordered locus">HCH_00522</name>
</gene>
<sequence length="331" mass="37831">MSQYVICALYKFVALDNFEALRAPLLEVMEKNEVKGTLLLAREGVNGTVSGTREGMDALLAWLKSDPRLADLSYKESYDENIPFYRTKVKLKKEIVTMGVEGIDPKRVVGTYVKPQDWNALITDPEVLLIDTRNDYEVQIGKFKNAINPNTETFREFPDYVKSNLDPAKHKKVAMYCTGGIRCEKSTAYLKELGFEDVYHLEGGILKYLEDVPQEESTWEGECFVFDNRVAVDHSLNKGSYDQCHACRMPISAEDMQSEHYKKGVSCPHCYDKVSEDQLRRFAAREQQIELAKSRGEEHIGSEAAKAIKKRQAEKKLKRKNYHQHLTQGAE</sequence>
<organism>
    <name type="scientific">Hahella chejuensis (strain KCTC 2396)</name>
    <dbReference type="NCBI Taxonomy" id="349521"/>
    <lineage>
        <taxon>Bacteria</taxon>
        <taxon>Pseudomonadati</taxon>
        <taxon>Pseudomonadota</taxon>
        <taxon>Gammaproteobacteria</taxon>
        <taxon>Oceanospirillales</taxon>
        <taxon>Hahellaceae</taxon>
        <taxon>Hahella</taxon>
    </lineage>
</organism>
<dbReference type="EC" id="1.14.-.-" evidence="1"/>
<dbReference type="EMBL" id="CP000155">
    <property type="protein sequence ID" value="ABC27427.1"/>
    <property type="molecule type" value="Genomic_DNA"/>
</dbReference>
<dbReference type="RefSeq" id="WP_011394504.1">
    <property type="nucleotide sequence ID" value="NC_007645.1"/>
</dbReference>
<dbReference type="SMR" id="Q2SPJ7"/>
<dbReference type="STRING" id="349521.HCH_00522"/>
<dbReference type="KEGG" id="hch:HCH_00522"/>
<dbReference type="eggNOG" id="COG1054">
    <property type="taxonomic scope" value="Bacteria"/>
</dbReference>
<dbReference type="HOGENOM" id="CLU_038878_0_0_6"/>
<dbReference type="OrthoDB" id="9778326at2"/>
<dbReference type="Proteomes" id="UP000000238">
    <property type="component" value="Chromosome"/>
</dbReference>
<dbReference type="GO" id="GO:0016705">
    <property type="term" value="F:oxidoreductase activity, acting on paired donors, with incorporation or reduction of molecular oxygen"/>
    <property type="evidence" value="ECO:0007669"/>
    <property type="project" value="UniProtKB-UniRule"/>
</dbReference>
<dbReference type="GO" id="GO:0006400">
    <property type="term" value="P:tRNA modification"/>
    <property type="evidence" value="ECO:0007669"/>
    <property type="project" value="UniProtKB-UniRule"/>
</dbReference>
<dbReference type="CDD" id="cd01518">
    <property type="entry name" value="RHOD_YceA"/>
    <property type="match status" value="1"/>
</dbReference>
<dbReference type="Gene3D" id="3.30.70.100">
    <property type="match status" value="1"/>
</dbReference>
<dbReference type="Gene3D" id="3.40.250.10">
    <property type="entry name" value="Rhodanese-like domain"/>
    <property type="match status" value="1"/>
</dbReference>
<dbReference type="HAMAP" id="MF_00469">
    <property type="entry name" value="TrhO"/>
    <property type="match status" value="1"/>
</dbReference>
<dbReference type="InterPro" id="IPR001763">
    <property type="entry name" value="Rhodanese-like_dom"/>
</dbReference>
<dbReference type="InterPro" id="IPR036873">
    <property type="entry name" value="Rhodanese-like_dom_sf"/>
</dbReference>
<dbReference type="InterPro" id="IPR020936">
    <property type="entry name" value="TrhO"/>
</dbReference>
<dbReference type="InterPro" id="IPR040503">
    <property type="entry name" value="TRHO_N"/>
</dbReference>
<dbReference type="NCBIfam" id="NF001135">
    <property type="entry name" value="PRK00142.1-3"/>
    <property type="match status" value="1"/>
</dbReference>
<dbReference type="NCBIfam" id="NF001136">
    <property type="entry name" value="PRK00142.1-4"/>
    <property type="match status" value="1"/>
</dbReference>
<dbReference type="PANTHER" id="PTHR43268:SF3">
    <property type="entry name" value="RHODANESE-LIKE DOMAIN-CONTAINING PROTEIN 7-RELATED"/>
    <property type="match status" value="1"/>
</dbReference>
<dbReference type="PANTHER" id="PTHR43268">
    <property type="entry name" value="THIOSULFATE SULFURTRANSFERASE/RHODANESE-LIKE DOMAIN-CONTAINING PROTEIN 2"/>
    <property type="match status" value="1"/>
</dbReference>
<dbReference type="Pfam" id="PF00581">
    <property type="entry name" value="Rhodanese"/>
    <property type="match status" value="1"/>
</dbReference>
<dbReference type="Pfam" id="PF17773">
    <property type="entry name" value="UPF0176_N"/>
    <property type="match status" value="1"/>
</dbReference>
<dbReference type="SMART" id="SM00450">
    <property type="entry name" value="RHOD"/>
    <property type="match status" value="1"/>
</dbReference>
<dbReference type="SUPFAM" id="SSF52821">
    <property type="entry name" value="Rhodanese/Cell cycle control phosphatase"/>
    <property type="match status" value="1"/>
</dbReference>
<dbReference type="PROSITE" id="PS50206">
    <property type="entry name" value="RHODANESE_3"/>
    <property type="match status" value="1"/>
</dbReference>
<reference key="1">
    <citation type="journal article" date="2005" name="Nucleic Acids Res.">
        <title>Genomic blueprint of Hahella chejuensis, a marine microbe producing an algicidal agent.</title>
        <authorList>
            <person name="Jeong H."/>
            <person name="Yim J.H."/>
            <person name="Lee C."/>
            <person name="Choi S.-H."/>
            <person name="Park Y.K."/>
            <person name="Yoon S.H."/>
            <person name="Hur C.-G."/>
            <person name="Kang H.-Y."/>
            <person name="Kim D."/>
            <person name="Lee H.H."/>
            <person name="Park K.H."/>
            <person name="Park S.-H."/>
            <person name="Park H.-S."/>
            <person name="Lee H.K."/>
            <person name="Oh T.K."/>
            <person name="Kim J.F."/>
        </authorList>
    </citation>
    <scope>NUCLEOTIDE SEQUENCE [LARGE SCALE GENOMIC DNA]</scope>
    <source>
        <strain>KCTC 2396</strain>
    </source>
</reference>